<dbReference type="EMBL" id="CP000926">
    <property type="protein sequence ID" value="ABY95919.1"/>
    <property type="molecule type" value="Genomic_DNA"/>
</dbReference>
<dbReference type="RefSeq" id="WP_012269841.1">
    <property type="nucleotide sequence ID" value="NC_010322.1"/>
</dbReference>
<dbReference type="SMR" id="B0KEU9"/>
<dbReference type="KEGG" id="ppg:PputGB1_0003"/>
<dbReference type="eggNOG" id="COG0593">
    <property type="taxonomic scope" value="Bacteria"/>
</dbReference>
<dbReference type="HOGENOM" id="CLU_026910_0_1_6"/>
<dbReference type="Proteomes" id="UP000002157">
    <property type="component" value="Chromosome"/>
</dbReference>
<dbReference type="GO" id="GO:0005737">
    <property type="term" value="C:cytoplasm"/>
    <property type="evidence" value="ECO:0007669"/>
    <property type="project" value="UniProtKB-SubCell"/>
</dbReference>
<dbReference type="GO" id="GO:0005886">
    <property type="term" value="C:plasma membrane"/>
    <property type="evidence" value="ECO:0007669"/>
    <property type="project" value="TreeGrafter"/>
</dbReference>
<dbReference type="GO" id="GO:0005524">
    <property type="term" value="F:ATP binding"/>
    <property type="evidence" value="ECO:0007669"/>
    <property type="project" value="UniProtKB-UniRule"/>
</dbReference>
<dbReference type="GO" id="GO:0016887">
    <property type="term" value="F:ATP hydrolysis activity"/>
    <property type="evidence" value="ECO:0007669"/>
    <property type="project" value="InterPro"/>
</dbReference>
<dbReference type="GO" id="GO:0003688">
    <property type="term" value="F:DNA replication origin binding"/>
    <property type="evidence" value="ECO:0007669"/>
    <property type="project" value="UniProtKB-UniRule"/>
</dbReference>
<dbReference type="GO" id="GO:0008289">
    <property type="term" value="F:lipid binding"/>
    <property type="evidence" value="ECO:0007669"/>
    <property type="project" value="UniProtKB-KW"/>
</dbReference>
<dbReference type="GO" id="GO:0006270">
    <property type="term" value="P:DNA replication initiation"/>
    <property type="evidence" value="ECO:0007669"/>
    <property type="project" value="UniProtKB-UniRule"/>
</dbReference>
<dbReference type="GO" id="GO:0006275">
    <property type="term" value="P:regulation of DNA replication"/>
    <property type="evidence" value="ECO:0007669"/>
    <property type="project" value="UniProtKB-UniRule"/>
</dbReference>
<dbReference type="CDD" id="cd00009">
    <property type="entry name" value="AAA"/>
    <property type="match status" value="1"/>
</dbReference>
<dbReference type="CDD" id="cd06571">
    <property type="entry name" value="Bac_DnaA_C"/>
    <property type="match status" value="1"/>
</dbReference>
<dbReference type="FunFam" id="1.10.1750.10:FF:000001">
    <property type="entry name" value="Chromosomal replication initiator protein DnaA"/>
    <property type="match status" value="1"/>
</dbReference>
<dbReference type="FunFam" id="1.10.8.60:FF:000003">
    <property type="entry name" value="Chromosomal replication initiator protein DnaA"/>
    <property type="match status" value="1"/>
</dbReference>
<dbReference type="FunFam" id="3.40.50.300:FF:000103">
    <property type="entry name" value="Chromosomal replication initiator protein DnaA"/>
    <property type="match status" value="1"/>
</dbReference>
<dbReference type="Gene3D" id="1.10.1750.10">
    <property type="match status" value="1"/>
</dbReference>
<dbReference type="Gene3D" id="1.10.8.60">
    <property type="match status" value="1"/>
</dbReference>
<dbReference type="Gene3D" id="3.30.300.180">
    <property type="match status" value="1"/>
</dbReference>
<dbReference type="Gene3D" id="3.40.50.300">
    <property type="entry name" value="P-loop containing nucleotide triphosphate hydrolases"/>
    <property type="match status" value="1"/>
</dbReference>
<dbReference type="HAMAP" id="MF_00377">
    <property type="entry name" value="DnaA_bact"/>
    <property type="match status" value="1"/>
</dbReference>
<dbReference type="InterPro" id="IPR003593">
    <property type="entry name" value="AAA+_ATPase"/>
</dbReference>
<dbReference type="InterPro" id="IPR001957">
    <property type="entry name" value="Chromosome_initiator_DnaA"/>
</dbReference>
<dbReference type="InterPro" id="IPR020591">
    <property type="entry name" value="Chromosome_initiator_DnaA-like"/>
</dbReference>
<dbReference type="InterPro" id="IPR018312">
    <property type="entry name" value="Chromosome_initiator_DnaA_CS"/>
</dbReference>
<dbReference type="InterPro" id="IPR013159">
    <property type="entry name" value="DnaA_C"/>
</dbReference>
<dbReference type="InterPro" id="IPR013317">
    <property type="entry name" value="DnaA_dom"/>
</dbReference>
<dbReference type="InterPro" id="IPR024633">
    <property type="entry name" value="DnaA_N_dom"/>
</dbReference>
<dbReference type="InterPro" id="IPR038454">
    <property type="entry name" value="DnaA_N_sf"/>
</dbReference>
<dbReference type="InterPro" id="IPR027417">
    <property type="entry name" value="P-loop_NTPase"/>
</dbReference>
<dbReference type="InterPro" id="IPR010921">
    <property type="entry name" value="Trp_repressor/repl_initiator"/>
</dbReference>
<dbReference type="NCBIfam" id="TIGR00362">
    <property type="entry name" value="DnaA"/>
    <property type="match status" value="1"/>
</dbReference>
<dbReference type="PANTHER" id="PTHR30050">
    <property type="entry name" value="CHROMOSOMAL REPLICATION INITIATOR PROTEIN DNAA"/>
    <property type="match status" value="1"/>
</dbReference>
<dbReference type="PANTHER" id="PTHR30050:SF2">
    <property type="entry name" value="CHROMOSOMAL REPLICATION INITIATOR PROTEIN DNAA"/>
    <property type="match status" value="1"/>
</dbReference>
<dbReference type="Pfam" id="PF00308">
    <property type="entry name" value="Bac_DnaA"/>
    <property type="match status" value="1"/>
</dbReference>
<dbReference type="Pfam" id="PF08299">
    <property type="entry name" value="Bac_DnaA_C"/>
    <property type="match status" value="1"/>
</dbReference>
<dbReference type="Pfam" id="PF11638">
    <property type="entry name" value="DnaA_N"/>
    <property type="match status" value="1"/>
</dbReference>
<dbReference type="PRINTS" id="PR00051">
    <property type="entry name" value="DNAA"/>
</dbReference>
<dbReference type="SMART" id="SM00382">
    <property type="entry name" value="AAA"/>
    <property type="match status" value="1"/>
</dbReference>
<dbReference type="SMART" id="SM00760">
    <property type="entry name" value="Bac_DnaA_C"/>
    <property type="match status" value="1"/>
</dbReference>
<dbReference type="SUPFAM" id="SSF52540">
    <property type="entry name" value="P-loop containing nucleoside triphosphate hydrolases"/>
    <property type="match status" value="1"/>
</dbReference>
<dbReference type="SUPFAM" id="SSF48295">
    <property type="entry name" value="TrpR-like"/>
    <property type="match status" value="1"/>
</dbReference>
<dbReference type="PROSITE" id="PS01008">
    <property type="entry name" value="DNAA"/>
    <property type="match status" value="1"/>
</dbReference>
<protein>
    <recommendedName>
        <fullName evidence="1">Chromosomal replication initiator protein DnaA</fullName>
    </recommendedName>
</protein>
<comment type="function">
    <text evidence="1">Plays an essential role in the initiation and regulation of chromosomal replication. ATP-DnaA binds to the origin of replication (oriC) to initiate formation of the DNA replication initiation complex once per cell cycle. Binds the DnaA box (a 9 base pair repeat at the origin) and separates the double-stranded (ds)DNA. Forms a right-handed helical filament on oriC DNA; dsDNA binds to the exterior of the filament while single-stranded (ss)DNA is stabiized in the filament's interior. The ATP-DnaA-oriC complex binds and stabilizes one strand of the AT-rich DNA unwinding element (DUE), permitting loading of DNA polymerase. After initiation quickly degrades to an ADP-DnaA complex that is not apt for DNA replication. Binds acidic phospholipids.</text>
</comment>
<comment type="subunit">
    <text evidence="1">Oligomerizes as a right-handed, spiral filament on DNA at oriC.</text>
</comment>
<comment type="subcellular location">
    <subcellularLocation>
        <location evidence="1">Cytoplasm</location>
    </subcellularLocation>
</comment>
<comment type="domain">
    <text evidence="1">Domain I is involved in oligomerization and binding regulators, domain II is flexibile and of varying length in different bacteria, domain III forms the AAA+ region, while domain IV binds dsDNA.</text>
</comment>
<comment type="similarity">
    <text evidence="1">Belongs to the DnaA family.</text>
</comment>
<sequence length="510" mass="56972">MSVELWQQCVELLRDELPAQQFNTWIRPLQVEAEGDELRVYAPNRFVLDWVNEKYLGRLLELLGENGSGIAPALSLLIGSRRSSAPRAAPNAPVSAAVAASLAQTQAHKAAPTPAAVEPIAVAAAEPVLVDELAEPSSRDSFDAMAEPASAPASSGRAEQRTVQVEGALKHTSYLNRTFTFDTFVEGKSNQLARAAAWQVADNPKHGYNPLFLYGGVGLGKTHLMHAVGNHLLKKNPNAKVVYLHSERFVADMVKALQLNAINEFKRFYRSVDALLIDDIQFFARKERSQEEFFHTFNALLEGGQQVILTSDRYPKEIEGLEERLKSRFGWGLTVAVEPPELETRVAILMKKADQAKVELPHDAAFFIAQRIRSNVRELEGALKRVIAHSHFMGRDITIELIRESLKDLLALQDKLVSVDNIQRTVAEYYKIKISDLLSKRRSRSVARPRQVAMALSKELTNHSLPEIGDMFGGRDHTTVLHACRKINELKESDADIREDYKNLLRTLTT</sequence>
<evidence type="ECO:0000255" key="1">
    <source>
        <dbReference type="HAMAP-Rule" id="MF_00377"/>
    </source>
</evidence>
<evidence type="ECO:0000256" key="2">
    <source>
        <dbReference type="SAM" id="MobiDB-lite"/>
    </source>
</evidence>
<feature type="chain" id="PRO_1000079957" description="Chromosomal replication initiator protein DnaA">
    <location>
        <begin position="1"/>
        <end position="510"/>
    </location>
</feature>
<feature type="region of interest" description="Domain I, interacts with DnaA modulators" evidence="1">
    <location>
        <begin position="1"/>
        <end position="87"/>
    </location>
</feature>
<feature type="region of interest" description="Domain II" evidence="1">
    <location>
        <begin position="87"/>
        <end position="173"/>
    </location>
</feature>
<feature type="region of interest" description="Disordered" evidence="2">
    <location>
        <begin position="140"/>
        <end position="160"/>
    </location>
</feature>
<feature type="region of interest" description="Domain III, AAA+ region" evidence="1">
    <location>
        <begin position="174"/>
        <end position="390"/>
    </location>
</feature>
<feature type="region of interest" description="Domain IV, binds dsDNA" evidence="1">
    <location>
        <begin position="391"/>
        <end position="510"/>
    </location>
</feature>
<feature type="compositionally biased region" description="Low complexity" evidence="2">
    <location>
        <begin position="144"/>
        <end position="157"/>
    </location>
</feature>
<feature type="binding site" evidence="1">
    <location>
        <position position="218"/>
    </location>
    <ligand>
        <name>ATP</name>
        <dbReference type="ChEBI" id="CHEBI:30616"/>
    </ligand>
</feature>
<feature type="binding site" evidence="1">
    <location>
        <position position="220"/>
    </location>
    <ligand>
        <name>ATP</name>
        <dbReference type="ChEBI" id="CHEBI:30616"/>
    </ligand>
</feature>
<feature type="binding site" evidence="1">
    <location>
        <position position="221"/>
    </location>
    <ligand>
        <name>ATP</name>
        <dbReference type="ChEBI" id="CHEBI:30616"/>
    </ligand>
</feature>
<feature type="binding site" evidence="1">
    <location>
        <position position="222"/>
    </location>
    <ligand>
        <name>ATP</name>
        <dbReference type="ChEBI" id="CHEBI:30616"/>
    </ligand>
</feature>
<proteinExistence type="inferred from homology"/>
<organism>
    <name type="scientific">Pseudomonas putida (strain GB-1)</name>
    <dbReference type="NCBI Taxonomy" id="76869"/>
    <lineage>
        <taxon>Bacteria</taxon>
        <taxon>Pseudomonadati</taxon>
        <taxon>Pseudomonadota</taxon>
        <taxon>Gammaproteobacteria</taxon>
        <taxon>Pseudomonadales</taxon>
        <taxon>Pseudomonadaceae</taxon>
        <taxon>Pseudomonas</taxon>
    </lineage>
</organism>
<accession>B0KEU9</accession>
<name>DNAA_PSEPG</name>
<reference key="1">
    <citation type="submission" date="2008-01" db="EMBL/GenBank/DDBJ databases">
        <title>Complete sequence of Pseudomonas putida GB-1.</title>
        <authorList>
            <consortium name="US DOE Joint Genome Institute"/>
            <person name="Copeland A."/>
            <person name="Lucas S."/>
            <person name="Lapidus A."/>
            <person name="Barry K."/>
            <person name="Glavina del Rio T."/>
            <person name="Dalin E."/>
            <person name="Tice H."/>
            <person name="Pitluck S."/>
            <person name="Bruce D."/>
            <person name="Goodwin L."/>
            <person name="Chertkov O."/>
            <person name="Brettin T."/>
            <person name="Detter J.C."/>
            <person name="Han C."/>
            <person name="Kuske C.R."/>
            <person name="Schmutz J."/>
            <person name="Larimer F."/>
            <person name="Land M."/>
            <person name="Hauser L."/>
            <person name="Kyrpides N."/>
            <person name="Kim E."/>
            <person name="McCarthy J.K."/>
            <person name="Richardson P."/>
        </authorList>
    </citation>
    <scope>NUCLEOTIDE SEQUENCE [LARGE SCALE GENOMIC DNA]</scope>
    <source>
        <strain>GB-1</strain>
    </source>
</reference>
<gene>
    <name evidence="1" type="primary">dnaA</name>
    <name type="ordered locus">PputGB1_0003</name>
</gene>
<keyword id="KW-0067">ATP-binding</keyword>
<keyword id="KW-0963">Cytoplasm</keyword>
<keyword id="KW-0235">DNA replication</keyword>
<keyword id="KW-0238">DNA-binding</keyword>
<keyword id="KW-0446">Lipid-binding</keyword>
<keyword id="KW-0547">Nucleotide-binding</keyword>